<organism>
    <name type="scientific">Candida albicans (strain SC5314 / ATCC MYA-2876)</name>
    <name type="common">Yeast</name>
    <dbReference type="NCBI Taxonomy" id="237561"/>
    <lineage>
        <taxon>Eukaryota</taxon>
        <taxon>Fungi</taxon>
        <taxon>Dikarya</taxon>
        <taxon>Ascomycota</taxon>
        <taxon>Saccharomycotina</taxon>
        <taxon>Pichiomycetes</taxon>
        <taxon>Debaryomycetaceae</taxon>
        <taxon>Candida/Lodderomyces clade</taxon>
        <taxon>Candida</taxon>
    </lineage>
</organism>
<feature type="chain" id="PRO_0000365667" description="Adenylate kinase">
    <location>
        <begin position="1"/>
        <end position="249"/>
    </location>
</feature>
<feature type="region of interest" description="NMP" evidence="1">
    <location>
        <begin position="63"/>
        <end position="92"/>
    </location>
</feature>
<feature type="region of interest" description="LID" evidence="1">
    <location>
        <begin position="160"/>
        <end position="197"/>
    </location>
</feature>
<feature type="region of interest" description="Disordered" evidence="2">
    <location>
        <begin position="177"/>
        <end position="197"/>
    </location>
</feature>
<feature type="binding site" evidence="1">
    <location>
        <begin position="43"/>
        <end position="48"/>
    </location>
    <ligand>
        <name>ATP</name>
        <dbReference type="ChEBI" id="CHEBI:30616"/>
    </ligand>
</feature>
<feature type="binding site" evidence="1">
    <location>
        <position position="64"/>
    </location>
    <ligand>
        <name>AMP</name>
        <dbReference type="ChEBI" id="CHEBI:456215"/>
    </ligand>
</feature>
<feature type="binding site" evidence="1">
    <location>
        <position position="69"/>
    </location>
    <ligand>
        <name>AMP</name>
        <dbReference type="ChEBI" id="CHEBI:456215"/>
    </ligand>
</feature>
<feature type="binding site" evidence="1">
    <location>
        <begin position="90"/>
        <end position="92"/>
    </location>
    <ligand>
        <name>AMP</name>
        <dbReference type="ChEBI" id="CHEBI:456215"/>
    </ligand>
</feature>
<feature type="binding site" evidence="1">
    <location>
        <begin position="119"/>
        <end position="122"/>
    </location>
    <ligand>
        <name>AMP</name>
        <dbReference type="ChEBI" id="CHEBI:456215"/>
    </ligand>
</feature>
<feature type="binding site" evidence="1">
    <location>
        <position position="126"/>
    </location>
    <ligand>
        <name>AMP</name>
        <dbReference type="ChEBI" id="CHEBI:456215"/>
    </ligand>
</feature>
<feature type="binding site" evidence="1">
    <location>
        <position position="161"/>
    </location>
    <ligand>
        <name>ATP</name>
        <dbReference type="ChEBI" id="CHEBI:30616"/>
    </ligand>
</feature>
<feature type="binding site" evidence="1">
    <location>
        <begin position="170"/>
        <end position="171"/>
    </location>
    <ligand>
        <name>ATP</name>
        <dbReference type="ChEBI" id="CHEBI:30616"/>
    </ligand>
</feature>
<feature type="binding site" evidence="1">
    <location>
        <position position="194"/>
    </location>
    <ligand>
        <name>AMP</name>
        <dbReference type="ChEBI" id="CHEBI:456215"/>
    </ligand>
</feature>
<feature type="binding site" evidence="1">
    <location>
        <position position="205"/>
    </location>
    <ligand>
        <name>AMP</name>
        <dbReference type="ChEBI" id="CHEBI:456215"/>
    </ligand>
</feature>
<feature type="binding site" evidence="1">
    <location>
        <position position="233"/>
    </location>
    <ligand>
        <name>ATP</name>
        <dbReference type="ChEBI" id="CHEBI:30616"/>
    </ligand>
</feature>
<sequence length="249" mass="27580">MSIEDLKNTVTKLQERIQELEKKAGIIPDVPKSVRMVLIGPPGAGKGTQAPNLKEKFCACHLATGDMLRAQVAAKTALGVEAKKIMDQGGLVSDEIMVNMIKSELENNQECSKGFILDGFPRTIPQAEKLDSMLESRKTPLEKAVELKIDDELLVARITGRLVHPASGRSYHKLFNPPKKDMTDDVTGEPLVQRSDDNEDALKKRLVTYHKQTEPIVAYYQKTGIWSGVDASQKPTKVWSDILKCLGQN</sequence>
<evidence type="ECO:0000255" key="1">
    <source>
        <dbReference type="HAMAP-Rule" id="MF_03168"/>
    </source>
</evidence>
<evidence type="ECO:0000256" key="2">
    <source>
        <dbReference type="SAM" id="MobiDB-lite"/>
    </source>
</evidence>
<reference key="1">
    <citation type="journal article" date="2004" name="Proc. Natl. Acad. Sci. U.S.A.">
        <title>The diploid genome sequence of Candida albicans.</title>
        <authorList>
            <person name="Jones T."/>
            <person name="Federspiel N.A."/>
            <person name="Chibana H."/>
            <person name="Dungan J."/>
            <person name="Kalman S."/>
            <person name="Magee B.B."/>
            <person name="Newport G."/>
            <person name="Thorstenson Y.R."/>
            <person name="Agabian N."/>
            <person name="Magee P.T."/>
            <person name="Davis R.W."/>
            <person name="Scherer S."/>
        </authorList>
    </citation>
    <scope>NUCLEOTIDE SEQUENCE [LARGE SCALE GENOMIC DNA]</scope>
    <source>
        <strain>SC5314 / ATCC MYA-2876</strain>
    </source>
</reference>
<reference key="2">
    <citation type="journal article" date="2007" name="Genome Biol.">
        <title>Assembly of the Candida albicans genome into sixteen supercontigs aligned on the eight chromosomes.</title>
        <authorList>
            <person name="van het Hoog M."/>
            <person name="Rast T.J."/>
            <person name="Martchenko M."/>
            <person name="Grindle S."/>
            <person name="Dignard D."/>
            <person name="Hogues H."/>
            <person name="Cuomo C."/>
            <person name="Berriman M."/>
            <person name="Scherer S."/>
            <person name="Magee B.B."/>
            <person name="Whiteway M."/>
            <person name="Chibana H."/>
            <person name="Nantel A."/>
            <person name="Magee P.T."/>
        </authorList>
    </citation>
    <scope>GENOME REANNOTATION</scope>
    <source>
        <strain>SC5314 / ATCC MYA-2876</strain>
    </source>
</reference>
<reference key="3">
    <citation type="journal article" date="2013" name="Genome Biol.">
        <title>Assembly of a phased diploid Candida albicans genome facilitates allele-specific measurements and provides a simple model for repeat and indel structure.</title>
        <authorList>
            <person name="Muzzey D."/>
            <person name="Schwartz K."/>
            <person name="Weissman J.S."/>
            <person name="Sherlock G."/>
        </authorList>
    </citation>
    <scope>NUCLEOTIDE SEQUENCE [LARGE SCALE GENOMIC DNA]</scope>
    <scope>GENOME REANNOTATION</scope>
    <source>
        <strain>SC5314 / ATCC MYA-2876</strain>
    </source>
</reference>
<proteinExistence type="inferred from homology"/>
<comment type="function">
    <text evidence="1">Catalyzes the reversible transfer of the terminal phosphate group between ATP and AMP. Plays an important role in cellular energy homeostasis and in adenine nucleotide metabolism. Adenylate kinase activity is critical for regulation of the phosphate utilization and the AMP de novo biosynthesis pathways.</text>
</comment>
<comment type="catalytic activity">
    <reaction evidence="1">
        <text>AMP + ATP = 2 ADP</text>
        <dbReference type="Rhea" id="RHEA:12973"/>
        <dbReference type="ChEBI" id="CHEBI:30616"/>
        <dbReference type="ChEBI" id="CHEBI:456215"/>
        <dbReference type="ChEBI" id="CHEBI:456216"/>
        <dbReference type="EC" id="2.7.4.3"/>
    </reaction>
</comment>
<comment type="subunit">
    <text evidence="1">Monomer.</text>
</comment>
<comment type="subcellular location">
    <subcellularLocation>
        <location evidence="1">Cytoplasm</location>
        <location evidence="1">Cytosol</location>
    </subcellularLocation>
    <subcellularLocation>
        <location evidence="1">Mitochondrion intermembrane space</location>
    </subcellularLocation>
    <text evidence="1">Predominantly mitochondrial.</text>
</comment>
<comment type="domain">
    <text evidence="1">Consists of three domains, a large central CORE domain and two small peripheral domains, NMPbind and LID, which undergo movements during catalysis. The LID domain closes over the site of phosphoryl transfer upon ATP binding. Assembling and dissambling the active center during each catalytic cycle provides an effective means to prevent ATP hydrolysis.</text>
</comment>
<comment type="similarity">
    <text evidence="1">Belongs to the adenylate kinase family. AK2 subfamily.</text>
</comment>
<name>KAD2_CANAL</name>
<accession>Q5A4Q1</accession>
<accession>A0A1D8PPQ7</accession>
<accession>Q59W41</accession>
<protein>
    <recommendedName>
        <fullName evidence="1">Adenylate kinase</fullName>
        <ecNumber evidence="1">2.7.4.3</ecNumber>
    </recommendedName>
    <alternativeName>
        <fullName evidence="1">ATP-AMP transphosphorylase</fullName>
    </alternativeName>
    <alternativeName>
        <fullName evidence="1">ATP:AMP phosphotransferase</fullName>
    </alternativeName>
    <alternativeName>
        <fullName evidence="1">Adenylate kinase cytosolic and mitochondrial</fullName>
    </alternativeName>
    <alternativeName>
        <fullName evidence="1">Adenylate monophosphate kinase</fullName>
    </alternativeName>
</protein>
<gene>
    <name evidence="1" type="primary">ADK1</name>
    <name type="synonym">ADK11</name>
    <name type="synonym">ADK12</name>
    <name type="ordered locus">CAALFM_C601910WA</name>
    <name type="ORF">CaO19.10894</name>
    <name type="ORF">CaO19.3391</name>
</gene>
<dbReference type="EC" id="2.7.4.3" evidence="1"/>
<dbReference type="EMBL" id="CP017628">
    <property type="protein sequence ID" value="AOW30127.1"/>
    <property type="molecule type" value="Genomic_DNA"/>
</dbReference>
<dbReference type="RefSeq" id="XP_716701.2">
    <property type="nucleotide sequence ID" value="XM_711608.2"/>
</dbReference>
<dbReference type="SMR" id="Q5A4Q1"/>
<dbReference type="FunCoup" id="Q5A4Q1">
    <property type="interactions" value="878"/>
</dbReference>
<dbReference type="STRING" id="237561.Q5A4Q1"/>
<dbReference type="EnsemblFungi" id="C6_01910W_A-T">
    <property type="protein sequence ID" value="C6_01910W_A-T-p1"/>
    <property type="gene ID" value="C6_01910W_A"/>
</dbReference>
<dbReference type="GeneID" id="3644533"/>
<dbReference type="KEGG" id="cal:CAALFM_C601910WA"/>
<dbReference type="CGD" id="CAL0000198757">
    <property type="gene designation" value="ADK1"/>
</dbReference>
<dbReference type="VEuPathDB" id="FungiDB:C6_01910W_A"/>
<dbReference type="eggNOG" id="KOG3078">
    <property type="taxonomic scope" value="Eukaryota"/>
</dbReference>
<dbReference type="HOGENOM" id="CLU_032354_1_0_1"/>
<dbReference type="InParanoid" id="Q5A4Q1"/>
<dbReference type="OrthoDB" id="439792at2759"/>
<dbReference type="PRO" id="PR:Q5A4Q1"/>
<dbReference type="Proteomes" id="UP000000559">
    <property type="component" value="Chromosome 6"/>
</dbReference>
<dbReference type="GO" id="GO:0005737">
    <property type="term" value="C:cytoplasm"/>
    <property type="evidence" value="ECO:0000318"/>
    <property type="project" value="GO_Central"/>
</dbReference>
<dbReference type="GO" id="GO:0005829">
    <property type="term" value="C:cytosol"/>
    <property type="evidence" value="ECO:0007669"/>
    <property type="project" value="UniProtKB-SubCell"/>
</dbReference>
<dbReference type="GO" id="GO:0005758">
    <property type="term" value="C:mitochondrial intermembrane space"/>
    <property type="evidence" value="ECO:0007669"/>
    <property type="project" value="UniProtKB-SubCell"/>
</dbReference>
<dbReference type="GO" id="GO:0005739">
    <property type="term" value="C:mitochondrion"/>
    <property type="evidence" value="ECO:0000318"/>
    <property type="project" value="GO_Central"/>
</dbReference>
<dbReference type="GO" id="GO:0004017">
    <property type="term" value="F:adenylate kinase activity"/>
    <property type="evidence" value="ECO:0000318"/>
    <property type="project" value="GO_Central"/>
</dbReference>
<dbReference type="GO" id="GO:0016208">
    <property type="term" value="F:AMP binding"/>
    <property type="evidence" value="ECO:0007669"/>
    <property type="project" value="EnsemblFungi"/>
</dbReference>
<dbReference type="GO" id="GO:0005524">
    <property type="term" value="F:ATP binding"/>
    <property type="evidence" value="ECO:0007669"/>
    <property type="project" value="UniProtKB-KW"/>
</dbReference>
<dbReference type="GO" id="GO:0003688">
    <property type="term" value="F:DNA replication origin binding"/>
    <property type="evidence" value="ECO:0007669"/>
    <property type="project" value="EnsemblFungi"/>
</dbReference>
<dbReference type="GO" id="GO:0006172">
    <property type="term" value="P:ADP biosynthetic process"/>
    <property type="evidence" value="ECO:0000318"/>
    <property type="project" value="GO_Central"/>
</dbReference>
<dbReference type="GO" id="GO:0046033">
    <property type="term" value="P:AMP metabolic process"/>
    <property type="evidence" value="ECO:0007669"/>
    <property type="project" value="UniProtKB-UniRule"/>
</dbReference>
<dbReference type="GO" id="GO:0046034">
    <property type="term" value="P:ATP metabolic process"/>
    <property type="evidence" value="ECO:0007669"/>
    <property type="project" value="UniProtKB-UniRule"/>
</dbReference>
<dbReference type="GO" id="GO:0006270">
    <property type="term" value="P:DNA replication initiation"/>
    <property type="evidence" value="ECO:0007669"/>
    <property type="project" value="EnsemblFungi"/>
</dbReference>
<dbReference type="GO" id="GO:0036388">
    <property type="term" value="P:pre-replicative complex assembly"/>
    <property type="evidence" value="ECO:0007669"/>
    <property type="project" value="EnsemblFungi"/>
</dbReference>
<dbReference type="CDD" id="cd01428">
    <property type="entry name" value="ADK"/>
    <property type="match status" value="1"/>
</dbReference>
<dbReference type="FunFam" id="3.40.50.300:FF:000106">
    <property type="entry name" value="Adenylate kinase mitochondrial"/>
    <property type="match status" value="1"/>
</dbReference>
<dbReference type="Gene3D" id="3.40.50.300">
    <property type="entry name" value="P-loop containing nucleotide triphosphate hydrolases"/>
    <property type="match status" value="1"/>
</dbReference>
<dbReference type="HAMAP" id="MF_00235">
    <property type="entry name" value="Adenylate_kinase_Adk"/>
    <property type="match status" value="1"/>
</dbReference>
<dbReference type="HAMAP" id="MF_03168">
    <property type="entry name" value="Adenylate_kinase_AK2"/>
    <property type="match status" value="1"/>
</dbReference>
<dbReference type="InterPro" id="IPR006259">
    <property type="entry name" value="Adenyl_kin_sub"/>
</dbReference>
<dbReference type="InterPro" id="IPR000850">
    <property type="entry name" value="Adenylat/UMP-CMP_kin"/>
</dbReference>
<dbReference type="InterPro" id="IPR033690">
    <property type="entry name" value="Adenylat_kinase_CS"/>
</dbReference>
<dbReference type="InterPro" id="IPR007862">
    <property type="entry name" value="Adenylate_kinase_lid-dom"/>
</dbReference>
<dbReference type="InterPro" id="IPR028587">
    <property type="entry name" value="AK2"/>
</dbReference>
<dbReference type="InterPro" id="IPR027417">
    <property type="entry name" value="P-loop_NTPase"/>
</dbReference>
<dbReference type="NCBIfam" id="TIGR01351">
    <property type="entry name" value="adk"/>
    <property type="match status" value="1"/>
</dbReference>
<dbReference type="NCBIfam" id="NF001380">
    <property type="entry name" value="PRK00279.1-2"/>
    <property type="match status" value="1"/>
</dbReference>
<dbReference type="NCBIfam" id="NF001381">
    <property type="entry name" value="PRK00279.1-3"/>
    <property type="match status" value="1"/>
</dbReference>
<dbReference type="NCBIfam" id="NF011100">
    <property type="entry name" value="PRK14527.1"/>
    <property type="match status" value="1"/>
</dbReference>
<dbReference type="PANTHER" id="PTHR23359">
    <property type="entry name" value="NUCLEOTIDE KINASE"/>
    <property type="match status" value="1"/>
</dbReference>
<dbReference type="Pfam" id="PF00406">
    <property type="entry name" value="ADK"/>
    <property type="match status" value="1"/>
</dbReference>
<dbReference type="Pfam" id="PF05191">
    <property type="entry name" value="ADK_lid"/>
    <property type="match status" value="1"/>
</dbReference>
<dbReference type="PRINTS" id="PR00094">
    <property type="entry name" value="ADENYLTKNASE"/>
</dbReference>
<dbReference type="SUPFAM" id="SSF52540">
    <property type="entry name" value="P-loop containing nucleoside triphosphate hydrolases"/>
    <property type="match status" value="1"/>
</dbReference>
<dbReference type="PROSITE" id="PS00113">
    <property type="entry name" value="ADENYLATE_KINASE"/>
    <property type="match status" value="1"/>
</dbReference>
<keyword id="KW-0067">ATP-binding</keyword>
<keyword id="KW-0963">Cytoplasm</keyword>
<keyword id="KW-0418">Kinase</keyword>
<keyword id="KW-0496">Mitochondrion</keyword>
<keyword id="KW-0547">Nucleotide-binding</keyword>
<keyword id="KW-1185">Reference proteome</keyword>
<keyword id="KW-0808">Transferase</keyword>